<accession>Q2GFT0</accession>
<protein>
    <recommendedName>
        <fullName evidence="1">Small ribosomal subunit protein uS4</fullName>
    </recommendedName>
    <alternativeName>
        <fullName evidence="2">30S ribosomal protein S4</fullName>
    </alternativeName>
</protein>
<proteinExistence type="inferred from homology"/>
<feature type="chain" id="PRO_0000293273" description="Small ribosomal subunit protein uS4">
    <location>
        <begin position="1"/>
        <end position="202"/>
    </location>
</feature>
<feature type="domain" description="S4 RNA-binding" evidence="1">
    <location>
        <begin position="91"/>
        <end position="168"/>
    </location>
</feature>
<comment type="function">
    <text evidence="1">One of the primary rRNA binding proteins, it binds directly to 16S rRNA where it nucleates assembly of the body of the 30S subunit.</text>
</comment>
<comment type="function">
    <text evidence="1">With S5 and S12 plays an important role in translational accuracy.</text>
</comment>
<comment type="subunit">
    <text evidence="1">Part of the 30S ribosomal subunit. Contacts protein S5. The interaction surface between S4 and S5 is involved in control of translational fidelity.</text>
</comment>
<comment type="similarity">
    <text evidence="1">Belongs to the universal ribosomal protein uS4 family.</text>
</comment>
<sequence length="202" mass="23164">MVIQRKYRASRRLGVNLWGRSKDPFNTRNYPPGQHGGMGYKKPSDFGKQFAAHKKFKFYYAINSKQMRNIFLKAYKKRGDTGDNFVGLLESRLSSVLYNSGLVPTIFSARQLISHKHVLVNGKTVNISSYVVKVGDVVTLKEKAKNLPAVVFAVQSQEQKVPDYLEVDTQEKSIRYLRVPKYCEVPYPATMEVNLVIEFYSR</sequence>
<name>RS4_EHRCR</name>
<gene>
    <name evidence="1" type="primary">rpsD</name>
    <name type="ordered locus">ECH_0912</name>
</gene>
<reference key="1">
    <citation type="journal article" date="2006" name="PLoS Genet.">
        <title>Comparative genomics of emerging human ehrlichiosis agents.</title>
        <authorList>
            <person name="Dunning Hotopp J.C."/>
            <person name="Lin M."/>
            <person name="Madupu R."/>
            <person name="Crabtree J."/>
            <person name="Angiuoli S.V."/>
            <person name="Eisen J.A."/>
            <person name="Seshadri R."/>
            <person name="Ren Q."/>
            <person name="Wu M."/>
            <person name="Utterback T.R."/>
            <person name="Smith S."/>
            <person name="Lewis M."/>
            <person name="Khouri H."/>
            <person name="Zhang C."/>
            <person name="Niu H."/>
            <person name="Lin Q."/>
            <person name="Ohashi N."/>
            <person name="Zhi N."/>
            <person name="Nelson W.C."/>
            <person name="Brinkac L.M."/>
            <person name="Dodson R.J."/>
            <person name="Rosovitz M.J."/>
            <person name="Sundaram J.P."/>
            <person name="Daugherty S.C."/>
            <person name="Davidsen T."/>
            <person name="Durkin A.S."/>
            <person name="Gwinn M.L."/>
            <person name="Haft D.H."/>
            <person name="Selengut J.D."/>
            <person name="Sullivan S.A."/>
            <person name="Zafar N."/>
            <person name="Zhou L."/>
            <person name="Benahmed F."/>
            <person name="Forberger H."/>
            <person name="Halpin R."/>
            <person name="Mulligan S."/>
            <person name="Robinson J."/>
            <person name="White O."/>
            <person name="Rikihisa Y."/>
            <person name="Tettelin H."/>
        </authorList>
    </citation>
    <scope>NUCLEOTIDE SEQUENCE [LARGE SCALE GENOMIC DNA]</scope>
    <source>
        <strain>ATCC CRL-10679 / Arkansas</strain>
    </source>
</reference>
<keyword id="KW-1185">Reference proteome</keyword>
<keyword id="KW-0687">Ribonucleoprotein</keyword>
<keyword id="KW-0689">Ribosomal protein</keyword>
<keyword id="KW-0694">RNA-binding</keyword>
<keyword id="KW-0699">rRNA-binding</keyword>
<dbReference type="EMBL" id="CP000236">
    <property type="protein sequence ID" value="ABD44814.1"/>
    <property type="molecule type" value="Genomic_DNA"/>
</dbReference>
<dbReference type="RefSeq" id="WP_006010739.1">
    <property type="nucleotide sequence ID" value="NC_007799.1"/>
</dbReference>
<dbReference type="SMR" id="Q2GFT0"/>
<dbReference type="STRING" id="205920.ECH_0912"/>
<dbReference type="KEGG" id="ech:ECH_0912"/>
<dbReference type="eggNOG" id="COG0522">
    <property type="taxonomic scope" value="Bacteria"/>
</dbReference>
<dbReference type="HOGENOM" id="CLU_092403_0_0_5"/>
<dbReference type="OrthoDB" id="9803672at2"/>
<dbReference type="Proteomes" id="UP000008320">
    <property type="component" value="Chromosome"/>
</dbReference>
<dbReference type="GO" id="GO:0015935">
    <property type="term" value="C:small ribosomal subunit"/>
    <property type="evidence" value="ECO:0007669"/>
    <property type="project" value="InterPro"/>
</dbReference>
<dbReference type="GO" id="GO:0019843">
    <property type="term" value="F:rRNA binding"/>
    <property type="evidence" value="ECO:0007669"/>
    <property type="project" value="UniProtKB-UniRule"/>
</dbReference>
<dbReference type="GO" id="GO:0003735">
    <property type="term" value="F:structural constituent of ribosome"/>
    <property type="evidence" value="ECO:0007669"/>
    <property type="project" value="InterPro"/>
</dbReference>
<dbReference type="GO" id="GO:0042274">
    <property type="term" value="P:ribosomal small subunit biogenesis"/>
    <property type="evidence" value="ECO:0007669"/>
    <property type="project" value="TreeGrafter"/>
</dbReference>
<dbReference type="GO" id="GO:0006412">
    <property type="term" value="P:translation"/>
    <property type="evidence" value="ECO:0007669"/>
    <property type="project" value="UniProtKB-UniRule"/>
</dbReference>
<dbReference type="CDD" id="cd00165">
    <property type="entry name" value="S4"/>
    <property type="match status" value="1"/>
</dbReference>
<dbReference type="FunFam" id="3.10.290.10:FF:000001">
    <property type="entry name" value="30S ribosomal protein S4"/>
    <property type="match status" value="1"/>
</dbReference>
<dbReference type="Gene3D" id="1.10.1050.10">
    <property type="entry name" value="Ribosomal Protein S4 Delta 41, Chain A, domain 1"/>
    <property type="match status" value="1"/>
</dbReference>
<dbReference type="Gene3D" id="3.10.290.10">
    <property type="entry name" value="RNA-binding S4 domain"/>
    <property type="match status" value="1"/>
</dbReference>
<dbReference type="HAMAP" id="MF_01306_B">
    <property type="entry name" value="Ribosomal_uS4_B"/>
    <property type="match status" value="1"/>
</dbReference>
<dbReference type="InterPro" id="IPR022801">
    <property type="entry name" value="Ribosomal_uS4"/>
</dbReference>
<dbReference type="InterPro" id="IPR005709">
    <property type="entry name" value="Ribosomal_uS4_bac-type"/>
</dbReference>
<dbReference type="InterPro" id="IPR001912">
    <property type="entry name" value="Ribosomal_uS4_N"/>
</dbReference>
<dbReference type="InterPro" id="IPR002942">
    <property type="entry name" value="S4_RNA-bd"/>
</dbReference>
<dbReference type="InterPro" id="IPR036986">
    <property type="entry name" value="S4_RNA-bd_sf"/>
</dbReference>
<dbReference type="NCBIfam" id="NF003717">
    <property type="entry name" value="PRK05327.1"/>
    <property type="match status" value="1"/>
</dbReference>
<dbReference type="NCBIfam" id="TIGR01017">
    <property type="entry name" value="rpsD_bact"/>
    <property type="match status" value="1"/>
</dbReference>
<dbReference type="PANTHER" id="PTHR11831">
    <property type="entry name" value="30S 40S RIBOSOMAL PROTEIN"/>
    <property type="match status" value="1"/>
</dbReference>
<dbReference type="PANTHER" id="PTHR11831:SF4">
    <property type="entry name" value="SMALL RIBOSOMAL SUBUNIT PROTEIN US4M"/>
    <property type="match status" value="1"/>
</dbReference>
<dbReference type="Pfam" id="PF00163">
    <property type="entry name" value="Ribosomal_S4"/>
    <property type="match status" value="1"/>
</dbReference>
<dbReference type="Pfam" id="PF01479">
    <property type="entry name" value="S4"/>
    <property type="match status" value="1"/>
</dbReference>
<dbReference type="SMART" id="SM01390">
    <property type="entry name" value="Ribosomal_S4"/>
    <property type="match status" value="1"/>
</dbReference>
<dbReference type="SMART" id="SM00363">
    <property type="entry name" value="S4"/>
    <property type="match status" value="1"/>
</dbReference>
<dbReference type="SUPFAM" id="SSF55174">
    <property type="entry name" value="Alpha-L RNA-binding motif"/>
    <property type="match status" value="1"/>
</dbReference>
<dbReference type="PROSITE" id="PS50889">
    <property type="entry name" value="S4"/>
    <property type="match status" value="1"/>
</dbReference>
<evidence type="ECO:0000255" key="1">
    <source>
        <dbReference type="HAMAP-Rule" id="MF_01306"/>
    </source>
</evidence>
<evidence type="ECO:0000305" key="2"/>
<organism>
    <name type="scientific">Ehrlichia chaffeensis (strain ATCC CRL-10679 / Arkansas)</name>
    <dbReference type="NCBI Taxonomy" id="205920"/>
    <lineage>
        <taxon>Bacteria</taxon>
        <taxon>Pseudomonadati</taxon>
        <taxon>Pseudomonadota</taxon>
        <taxon>Alphaproteobacteria</taxon>
        <taxon>Rickettsiales</taxon>
        <taxon>Anaplasmataceae</taxon>
        <taxon>Ehrlichia</taxon>
    </lineage>
</organism>